<keyword id="KW-0687">Ribonucleoprotein</keyword>
<keyword id="KW-0689">Ribosomal protein</keyword>
<keyword id="KW-0694">RNA-binding</keyword>
<keyword id="KW-0699">rRNA-binding</keyword>
<accession>B8DB19</accession>
<sequence length="103" mass="11179">MHVKKGDKVKVITGKDKGKSGKVLAAFPKKDRVLIEGINMVKKHTKPSNVNPQGGILNVEAPIHVSNVMLIDPKTGEPTRVGYEVKGDKKVRVAKKSGEVIDK</sequence>
<organism>
    <name type="scientific">Listeria monocytogenes serotype 4a (strain HCC23)</name>
    <dbReference type="NCBI Taxonomy" id="552536"/>
    <lineage>
        <taxon>Bacteria</taxon>
        <taxon>Bacillati</taxon>
        <taxon>Bacillota</taxon>
        <taxon>Bacilli</taxon>
        <taxon>Bacillales</taxon>
        <taxon>Listeriaceae</taxon>
        <taxon>Listeria</taxon>
    </lineage>
</organism>
<feature type="chain" id="PRO_1000165950" description="Large ribosomal subunit protein uL24">
    <location>
        <begin position="1"/>
        <end position="103"/>
    </location>
</feature>
<protein>
    <recommendedName>
        <fullName evidence="1">Large ribosomal subunit protein uL24</fullName>
    </recommendedName>
    <alternativeName>
        <fullName evidence="2">50S ribosomal protein L24</fullName>
    </alternativeName>
</protein>
<gene>
    <name evidence="1" type="primary">rplX</name>
    <name type="ordered locus">LMHCC_2913</name>
</gene>
<evidence type="ECO:0000255" key="1">
    <source>
        <dbReference type="HAMAP-Rule" id="MF_01326"/>
    </source>
</evidence>
<evidence type="ECO:0000305" key="2"/>
<name>RL24_LISMH</name>
<reference key="1">
    <citation type="journal article" date="2011" name="J. Bacteriol.">
        <title>Genome sequence of lineage III Listeria monocytogenes strain HCC23.</title>
        <authorList>
            <person name="Steele C.L."/>
            <person name="Donaldson J.R."/>
            <person name="Paul D."/>
            <person name="Banes M.M."/>
            <person name="Arick T."/>
            <person name="Bridges S.M."/>
            <person name="Lawrence M.L."/>
        </authorList>
    </citation>
    <scope>NUCLEOTIDE SEQUENCE [LARGE SCALE GENOMIC DNA]</scope>
    <source>
        <strain>HCC23</strain>
    </source>
</reference>
<dbReference type="EMBL" id="CP001175">
    <property type="protein sequence ID" value="ACK41244.1"/>
    <property type="molecule type" value="Genomic_DNA"/>
</dbReference>
<dbReference type="RefSeq" id="WP_003728539.1">
    <property type="nucleotide sequence ID" value="NC_011660.1"/>
</dbReference>
<dbReference type="SMR" id="B8DB19"/>
<dbReference type="GeneID" id="86846147"/>
<dbReference type="KEGG" id="lmh:LMHCC_2913"/>
<dbReference type="HOGENOM" id="CLU_093315_2_0_9"/>
<dbReference type="GO" id="GO:1990904">
    <property type="term" value="C:ribonucleoprotein complex"/>
    <property type="evidence" value="ECO:0007669"/>
    <property type="project" value="UniProtKB-KW"/>
</dbReference>
<dbReference type="GO" id="GO:0005840">
    <property type="term" value="C:ribosome"/>
    <property type="evidence" value="ECO:0007669"/>
    <property type="project" value="UniProtKB-KW"/>
</dbReference>
<dbReference type="GO" id="GO:0019843">
    <property type="term" value="F:rRNA binding"/>
    <property type="evidence" value="ECO:0007669"/>
    <property type="project" value="UniProtKB-UniRule"/>
</dbReference>
<dbReference type="GO" id="GO:0003735">
    <property type="term" value="F:structural constituent of ribosome"/>
    <property type="evidence" value="ECO:0007669"/>
    <property type="project" value="InterPro"/>
</dbReference>
<dbReference type="GO" id="GO:0006412">
    <property type="term" value="P:translation"/>
    <property type="evidence" value="ECO:0007669"/>
    <property type="project" value="UniProtKB-UniRule"/>
</dbReference>
<dbReference type="CDD" id="cd06089">
    <property type="entry name" value="KOW_RPL26"/>
    <property type="match status" value="1"/>
</dbReference>
<dbReference type="FunFam" id="2.30.30.30:FF:000004">
    <property type="entry name" value="50S ribosomal protein L24"/>
    <property type="match status" value="1"/>
</dbReference>
<dbReference type="Gene3D" id="2.30.30.30">
    <property type="match status" value="1"/>
</dbReference>
<dbReference type="HAMAP" id="MF_01326_B">
    <property type="entry name" value="Ribosomal_uL24_B"/>
    <property type="match status" value="1"/>
</dbReference>
<dbReference type="InterPro" id="IPR005824">
    <property type="entry name" value="KOW"/>
</dbReference>
<dbReference type="InterPro" id="IPR014722">
    <property type="entry name" value="Rib_uL2_dom2"/>
</dbReference>
<dbReference type="InterPro" id="IPR003256">
    <property type="entry name" value="Ribosomal_uL24"/>
</dbReference>
<dbReference type="InterPro" id="IPR005825">
    <property type="entry name" value="Ribosomal_uL24_CS"/>
</dbReference>
<dbReference type="InterPro" id="IPR041988">
    <property type="entry name" value="Ribosomal_uL24_KOW"/>
</dbReference>
<dbReference type="InterPro" id="IPR008991">
    <property type="entry name" value="Translation_prot_SH3-like_sf"/>
</dbReference>
<dbReference type="NCBIfam" id="TIGR01079">
    <property type="entry name" value="rplX_bact"/>
    <property type="match status" value="1"/>
</dbReference>
<dbReference type="PANTHER" id="PTHR12903">
    <property type="entry name" value="MITOCHONDRIAL RIBOSOMAL PROTEIN L24"/>
    <property type="match status" value="1"/>
</dbReference>
<dbReference type="Pfam" id="PF00467">
    <property type="entry name" value="KOW"/>
    <property type="match status" value="1"/>
</dbReference>
<dbReference type="Pfam" id="PF17136">
    <property type="entry name" value="ribosomal_L24"/>
    <property type="match status" value="1"/>
</dbReference>
<dbReference type="SMART" id="SM00739">
    <property type="entry name" value="KOW"/>
    <property type="match status" value="1"/>
</dbReference>
<dbReference type="SUPFAM" id="SSF50104">
    <property type="entry name" value="Translation proteins SH3-like domain"/>
    <property type="match status" value="1"/>
</dbReference>
<dbReference type="PROSITE" id="PS01108">
    <property type="entry name" value="RIBOSOMAL_L24"/>
    <property type="match status" value="1"/>
</dbReference>
<comment type="function">
    <text evidence="1">One of two assembly initiator proteins, it binds directly to the 5'-end of the 23S rRNA, where it nucleates assembly of the 50S subunit.</text>
</comment>
<comment type="function">
    <text evidence="1">One of the proteins that surrounds the polypeptide exit tunnel on the outside of the subunit.</text>
</comment>
<comment type="subunit">
    <text evidence="1">Part of the 50S ribosomal subunit.</text>
</comment>
<comment type="similarity">
    <text evidence="1">Belongs to the universal ribosomal protein uL24 family.</text>
</comment>
<proteinExistence type="inferred from homology"/>